<proteinExistence type="inferred from homology"/>
<keyword id="KW-0056">Arginine metabolism</keyword>
<keyword id="KW-0378">Hydrolase</keyword>
<keyword id="KW-1185">Reference proteome</keyword>
<comment type="function">
    <text evidence="1">Catalyzes the hydrolysis of N(2)-succinylarginine into N(2)-succinylornithine, ammonia and CO(2).</text>
</comment>
<comment type="catalytic activity">
    <reaction evidence="1">
        <text>N(2)-succinyl-L-arginine + 2 H2O + 2 H(+) = N(2)-succinyl-L-ornithine + 2 NH4(+) + CO2</text>
        <dbReference type="Rhea" id="RHEA:19533"/>
        <dbReference type="ChEBI" id="CHEBI:15377"/>
        <dbReference type="ChEBI" id="CHEBI:15378"/>
        <dbReference type="ChEBI" id="CHEBI:16526"/>
        <dbReference type="ChEBI" id="CHEBI:28938"/>
        <dbReference type="ChEBI" id="CHEBI:58241"/>
        <dbReference type="ChEBI" id="CHEBI:58514"/>
        <dbReference type="EC" id="3.5.3.23"/>
    </reaction>
</comment>
<comment type="pathway">
    <text evidence="1">Amino-acid degradation; L-arginine degradation via AST pathway; L-glutamate and succinate from L-arginine: step 2/5.</text>
</comment>
<comment type="subunit">
    <text evidence="1">Homodimer.</text>
</comment>
<comment type="similarity">
    <text evidence="1">Belongs to the succinylarginine dihydrolase family.</text>
</comment>
<sequence>MKSCEVNFDGLVGPTHNYGGLSYGNVASQSNSQQCSNPREAALQGLAKMKALMDMGFTQGVLAPQERPDVASLRQLGFTGSDEQVIEKAARQDMPLLVASCSASSMWVANAATVSPSADTADGRVHFTAANLNCKYHRSIEHPTTSRVLGAMFADAKHFAHHPALPSVAQFGDEGAANHTRFCQDYGQAGVEFFVFGRSAFDTRYAAPQKYPARQTLEASRAVARLHGLSDECVVYGQQNPAVIDQGVFHNDVIAVGNGEVLFYHEDAFLHTEQMLGELRDKLSRAGGQLQAVCVPRAEVSVQDAVRSYLFNSQLLSRPDGSMLLIVPQECQANANVWGYLQRLIADAGPVAEVKVFDLKQSMQNGGGPACLRLRVALNETELAAVNPGVIMTAPLYETLTQWVDRHYRDRMSENDLADPRLLTECRTALDELTQILKLGAVYPFQLN</sequence>
<evidence type="ECO:0000255" key="1">
    <source>
        <dbReference type="HAMAP-Rule" id="MF_01172"/>
    </source>
</evidence>
<protein>
    <recommendedName>
        <fullName evidence="1">N-succinylarginine dihydrolase</fullName>
        <ecNumber evidence="1">3.5.3.23</ecNumber>
    </recommendedName>
</protein>
<name>ASTB_PSESM</name>
<feature type="chain" id="PRO_0000262370" description="N-succinylarginine dihydrolase">
    <location>
        <begin position="1"/>
        <end position="448"/>
    </location>
</feature>
<feature type="active site" evidence="1">
    <location>
        <position position="174"/>
    </location>
</feature>
<feature type="active site" evidence="1">
    <location>
        <position position="250"/>
    </location>
</feature>
<feature type="active site" description="Nucleophile" evidence="1">
    <location>
        <position position="371"/>
    </location>
</feature>
<feature type="binding site" evidence="1">
    <location>
        <begin position="19"/>
        <end position="28"/>
    </location>
    <ligand>
        <name>substrate</name>
    </ligand>
</feature>
<feature type="binding site" evidence="1">
    <location>
        <position position="110"/>
    </location>
    <ligand>
        <name>substrate</name>
    </ligand>
</feature>
<feature type="binding site" evidence="1">
    <location>
        <begin position="137"/>
        <end position="138"/>
    </location>
    <ligand>
        <name>substrate</name>
    </ligand>
</feature>
<feature type="binding site" evidence="1">
    <location>
        <position position="214"/>
    </location>
    <ligand>
        <name>substrate</name>
    </ligand>
</feature>
<feature type="binding site" evidence="1">
    <location>
        <position position="252"/>
    </location>
    <ligand>
        <name>substrate</name>
    </ligand>
</feature>
<feature type="binding site" evidence="1">
    <location>
        <position position="365"/>
    </location>
    <ligand>
        <name>substrate</name>
    </ligand>
</feature>
<reference key="1">
    <citation type="journal article" date="2003" name="Proc. Natl. Acad. Sci. U.S.A.">
        <title>The complete genome sequence of the Arabidopsis and tomato pathogen Pseudomonas syringae pv. tomato DC3000.</title>
        <authorList>
            <person name="Buell C.R."/>
            <person name="Joardar V."/>
            <person name="Lindeberg M."/>
            <person name="Selengut J."/>
            <person name="Paulsen I.T."/>
            <person name="Gwinn M.L."/>
            <person name="Dodson R.J."/>
            <person name="DeBoy R.T."/>
            <person name="Durkin A.S."/>
            <person name="Kolonay J.F."/>
            <person name="Madupu R."/>
            <person name="Daugherty S.C."/>
            <person name="Brinkac L.M."/>
            <person name="Beanan M.J."/>
            <person name="Haft D.H."/>
            <person name="Nelson W.C."/>
            <person name="Davidsen T.M."/>
            <person name="Zafar N."/>
            <person name="Zhou L."/>
            <person name="Liu J."/>
            <person name="Yuan Q."/>
            <person name="Khouri H.M."/>
            <person name="Fedorova N.B."/>
            <person name="Tran B."/>
            <person name="Russell D."/>
            <person name="Berry K.J."/>
            <person name="Utterback T.R."/>
            <person name="Van Aken S.E."/>
            <person name="Feldblyum T.V."/>
            <person name="D'Ascenzo M."/>
            <person name="Deng W.-L."/>
            <person name="Ramos A.R."/>
            <person name="Alfano J.R."/>
            <person name="Cartinhour S."/>
            <person name="Chatterjee A.K."/>
            <person name="Delaney T.P."/>
            <person name="Lazarowitz S.G."/>
            <person name="Martin G.B."/>
            <person name="Schneider D.J."/>
            <person name="Tang X."/>
            <person name="Bender C.L."/>
            <person name="White O."/>
            <person name="Fraser C.M."/>
            <person name="Collmer A."/>
        </authorList>
    </citation>
    <scope>NUCLEOTIDE SEQUENCE [LARGE SCALE GENOMIC DNA]</scope>
    <source>
        <strain>ATCC BAA-871 / DC3000</strain>
    </source>
</reference>
<accession>Q885J6</accession>
<gene>
    <name evidence="1" type="primary">astB</name>
    <name type="ordered locus">PSPTO_1836</name>
</gene>
<organism>
    <name type="scientific">Pseudomonas syringae pv. tomato (strain ATCC BAA-871 / DC3000)</name>
    <dbReference type="NCBI Taxonomy" id="223283"/>
    <lineage>
        <taxon>Bacteria</taxon>
        <taxon>Pseudomonadati</taxon>
        <taxon>Pseudomonadota</taxon>
        <taxon>Gammaproteobacteria</taxon>
        <taxon>Pseudomonadales</taxon>
        <taxon>Pseudomonadaceae</taxon>
        <taxon>Pseudomonas</taxon>
    </lineage>
</organism>
<dbReference type="EC" id="3.5.3.23" evidence="1"/>
<dbReference type="EMBL" id="AE016853">
    <property type="protein sequence ID" value="AAO55355.1"/>
    <property type="molecule type" value="Genomic_DNA"/>
</dbReference>
<dbReference type="RefSeq" id="NP_791660.1">
    <property type="nucleotide sequence ID" value="NC_004578.1"/>
</dbReference>
<dbReference type="RefSeq" id="WP_011103720.1">
    <property type="nucleotide sequence ID" value="NC_004578.1"/>
</dbReference>
<dbReference type="SMR" id="Q885J6"/>
<dbReference type="STRING" id="223283.PSPTO_1836"/>
<dbReference type="GeneID" id="1183477"/>
<dbReference type="KEGG" id="pst:PSPTO_1836"/>
<dbReference type="PATRIC" id="fig|223283.9.peg.1866"/>
<dbReference type="eggNOG" id="COG3724">
    <property type="taxonomic scope" value="Bacteria"/>
</dbReference>
<dbReference type="HOGENOM" id="CLU_053835_0_0_6"/>
<dbReference type="OrthoDB" id="248552at2"/>
<dbReference type="PhylomeDB" id="Q885J6"/>
<dbReference type="UniPathway" id="UPA00185">
    <property type="reaction ID" value="UER00280"/>
</dbReference>
<dbReference type="Proteomes" id="UP000002515">
    <property type="component" value="Chromosome"/>
</dbReference>
<dbReference type="GO" id="GO:0009015">
    <property type="term" value="F:N-succinylarginine dihydrolase activity"/>
    <property type="evidence" value="ECO:0007669"/>
    <property type="project" value="UniProtKB-UniRule"/>
</dbReference>
<dbReference type="GO" id="GO:0019544">
    <property type="term" value="P:arginine catabolic process to glutamate"/>
    <property type="evidence" value="ECO:0007669"/>
    <property type="project" value="UniProtKB-UniRule"/>
</dbReference>
<dbReference type="GO" id="GO:0019545">
    <property type="term" value="P:arginine catabolic process to succinate"/>
    <property type="evidence" value="ECO:0007669"/>
    <property type="project" value="UniProtKB-UniRule"/>
</dbReference>
<dbReference type="FunFam" id="3.75.10.20:FF:000001">
    <property type="entry name" value="N-succinylarginine dihydrolase"/>
    <property type="match status" value="1"/>
</dbReference>
<dbReference type="Gene3D" id="3.75.10.20">
    <property type="entry name" value="Succinylarginine dihydrolase"/>
    <property type="match status" value="1"/>
</dbReference>
<dbReference type="HAMAP" id="MF_01172">
    <property type="entry name" value="AstB"/>
    <property type="match status" value="1"/>
</dbReference>
<dbReference type="InterPro" id="IPR037031">
    <property type="entry name" value="AstB_sf"/>
</dbReference>
<dbReference type="InterPro" id="IPR007079">
    <property type="entry name" value="SuccinylArg_d-Hdrlase_AstB"/>
</dbReference>
<dbReference type="NCBIfam" id="TIGR03241">
    <property type="entry name" value="arg_catab_astB"/>
    <property type="match status" value="1"/>
</dbReference>
<dbReference type="NCBIfam" id="NF009789">
    <property type="entry name" value="PRK13281.1"/>
    <property type="match status" value="1"/>
</dbReference>
<dbReference type="PANTHER" id="PTHR30420">
    <property type="entry name" value="N-SUCCINYLARGININE DIHYDROLASE"/>
    <property type="match status" value="1"/>
</dbReference>
<dbReference type="PANTHER" id="PTHR30420:SF2">
    <property type="entry name" value="N-SUCCINYLARGININE DIHYDROLASE"/>
    <property type="match status" value="1"/>
</dbReference>
<dbReference type="Pfam" id="PF04996">
    <property type="entry name" value="AstB"/>
    <property type="match status" value="1"/>
</dbReference>
<dbReference type="SUPFAM" id="SSF55909">
    <property type="entry name" value="Pentein"/>
    <property type="match status" value="1"/>
</dbReference>